<evidence type="ECO:0000255" key="1">
    <source>
        <dbReference type="HAMAP-Rule" id="MF_01554"/>
    </source>
</evidence>
<accession>Q5P1F7</accession>
<protein>
    <recommendedName>
        <fullName evidence="1">Phosphoglucosamine mutase</fullName>
        <ecNumber evidence="1">5.4.2.10</ecNumber>
    </recommendedName>
</protein>
<comment type="function">
    <text evidence="1">Catalyzes the conversion of glucosamine-6-phosphate to glucosamine-1-phosphate.</text>
</comment>
<comment type="catalytic activity">
    <reaction evidence="1">
        <text>alpha-D-glucosamine 1-phosphate = D-glucosamine 6-phosphate</text>
        <dbReference type="Rhea" id="RHEA:23424"/>
        <dbReference type="ChEBI" id="CHEBI:58516"/>
        <dbReference type="ChEBI" id="CHEBI:58725"/>
        <dbReference type="EC" id="5.4.2.10"/>
    </reaction>
</comment>
<comment type="cofactor">
    <cofactor evidence="1">
        <name>Mg(2+)</name>
        <dbReference type="ChEBI" id="CHEBI:18420"/>
    </cofactor>
    <text evidence="1">Binds 1 Mg(2+) ion per subunit.</text>
</comment>
<comment type="PTM">
    <text evidence="1">Activated by phosphorylation.</text>
</comment>
<comment type="similarity">
    <text evidence="1">Belongs to the phosphohexose mutase family.</text>
</comment>
<reference key="1">
    <citation type="journal article" date="2005" name="Arch. Microbiol.">
        <title>The genome sequence of an anaerobic aromatic-degrading denitrifying bacterium, strain EbN1.</title>
        <authorList>
            <person name="Rabus R."/>
            <person name="Kube M."/>
            <person name="Heider J."/>
            <person name="Beck A."/>
            <person name="Heitmann K."/>
            <person name="Widdel F."/>
            <person name="Reinhardt R."/>
        </authorList>
    </citation>
    <scope>NUCLEOTIDE SEQUENCE [LARGE SCALE GENOMIC DNA]</scope>
    <source>
        <strain>DSM 19018 / LMG 30748 / EbN1</strain>
    </source>
</reference>
<keyword id="KW-0413">Isomerase</keyword>
<keyword id="KW-0460">Magnesium</keyword>
<keyword id="KW-0479">Metal-binding</keyword>
<keyword id="KW-0597">Phosphoprotein</keyword>
<keyword id="KW-1185">Reference proteome</keyword>
<name>GLMM_AROAE</name>
<dbReference type="EC" id="5.4.2.10" evidence="1"/>
<dbReference type="EMBL" id="CR555306">
    <property type="protein sequence ID" value="CAI08857.1"/>
    <property type="molecule type" value="Genomic_DNA"/>
</dbReference>
<dbReference type="RefSeq" id="WP_011238540.1">
    <property type="nucleotide sequence ID" value="NC_006513.1"/>
</dbReference>
<dbReference type="SMR" id="Q5P1F7"/>
<dbReference type="STRING" id="76114.ebA4825"/>
<dbReference type="KEGG" id="eba:ebA4825"/>
<dbReference type="eggNOG" id="COG1109">
    <property type="taxonomic scope" value="Bacteria"/>
</dbReference>
<dbReference type="HOGENOM" id="CLU_016950_7_0_4"/>
<dbReference type="OrthoDB" id="9803322at2"/>
<dbReference type="Proteomes" id="UP000006552">
    <property type="component" value="Chromosome"/>
</dbReference>
<dbReference type="GO" id="GO:0005829">
    <property type="term" value="C:cytosol"/>
    <property type="evidence" value="ECO:0007669"/>
    <property type="project" value="TreeGrafter"/>
</dbReference>
<dbReference type="GO" id="GO:0000287">
    <property type="term" value="F:magnesium ion binding"/>
    <property type="evidence" value="ECO:0007669"/>
    <property type="project" value="UniProtKB-UniRule"/>
</dbReference>
<dbReference type="GO" id="GO:0008966">
    <property type="term" value="F:phosphoglucosamine mutase activity"/>
    <property type="evidence" value="ECO:0007669"/>
    <property type="project" value="UniProtKB-UniRule"/>
</dbReference>
<dbReference type="GO" id="GO:0004615">
    <property type="term" value="F:phosphomannomutase activity"/>
    <property type="evidence" value="ECO:0007669"/>
    <property type="project" value="TreeGrafter"/>
</dbReference>
<dbReference type="GO" id="GO:0005975">
    <property type="term" value="P:carbohydrate metabolic process"/>
    <property type="evidence" value="ECO:0007669"/>
    <property type="project" value="InterPro"/>
</dbReference>
<dbReference type="GO" id="GO:0009252">
    <property type="term" value="P:peptidoglycan biosynthetic process"/>
    <property type="evidence" value="ECO:0007669"/>
    <property type="project" value="TreeGrafter"/>
</dbReference>
<dbReference type="GO" id="GO:0006048">
    <property type="term" value="P:UDP-N-acetylglucosamine biosynthetic process"/>
    <property type="evidence" value="ECO:0007669"/>
    <property type="project" value="TreeGrafter"/>
</dbReference>
<dbReference type="CDD" id="cd05802">
    <property type="entry name" value="GlmM"/>
    <property type="match status" value="1"/>
</dbReference>
<dbReference type="FunFam" id="3.30.310.50:FF:000001">
    <property type="entry name" value="Phosphoglucosamine mutase"/>
    <property type="match status" value="1"/>
</dbReference>
<dbReference type="FunFam" id="3.40.120.10:FF:000001">
    <property type="entry name" value="Phosphoglucosamine mutase"/>
    <property type="match status" value="1"/>
</dbReference>
<dbReference type="FunFam" id="3.40.120.10:FF:000002">
    <property type="entry name" value="Phosphoglucosamine mutase"/>
    <property type="match status" value="1"/>
</dbReference>
<dbReference type="Gene3D" id="3.40.120.10">
    <property type="entry name" value="Alpha-D-Glucose-1,6-Bisphosphate, subunit A, domain 3"/>
    <property type="match status" value="3"/>
</dbReference>
<dbReference type="Gene3D" id="3.30.310.50">
    <property type="entry name" value="Alpha-D-phosphohexomutase, C-terminal domain"/>
    <property type="match status" value="1"/>
</dbReference>
<dbReference type="HAMAP" id="MF_01554_B">
    <property type="entry name" value="GlmM_B"/>
    <property type="match status" value="1"/>
</dbReference>
<dbReference type="InterPro" id="IPR005844">
    <property type="entry name" value="A-D-PHexomutase_a/b/a-I"/>
</dbReference>
<dbReference type="InterPro" id="IPR016055">
    <property type="entry name" value="A-D-PHexomutase_a/b/a-I/II/III"/>
</dbReference>
<dbReference type="InterPro" id="IPR005845">
    <property type="entry name" value="A-D-PHexomutase_a/b/a-II"/>
</dbReference>
<dbReference type="InterPro" id="IPR005846">
    <property type="entry name" value="A-D-PHexomutase_a/b/a-III"/>
</dbReference>
<dbReference type="InterPro" id="IPR005843">
    <property type="entry name" value="A-D-PHexomutase_C"/>
</dbReference>
<dbReference type="InterPro" id="IPR036900">
    <property type="entry name" value="A-D-PHexomutase_C_sf"/>
</dbReference>
<dbReference type="InterPro" id="IPR016066">
    <property type="entry name" value="A-D-PHexomutase_CS"/>
</dbReference>
<dbReference type="InterPro" id="IPR005841">
    <property type="entry name" value="Alpha-D-phosphohexomutase_SF"/>
</dbReference>
<dbReference type="InterPro" id="IPR006352">
    <property type="entry name" value="GlmM_bact"/>
</dbReference>
<dbReference type="InterPro" id="IPR050060">
    <property type="entry name" value="Phosphoglucosamine_mutase"/>
</dbReference>
<dbReference type="NCBIfam" id="TIGR01455">
    <property type="entry name" value="glmM"/>
    <property type="match status" value="1"/>
</dbReference>
<dbReference type="NCBIfam" id="NF008139">
    <property type="entry name" value="PRK10887.1"/>
    <property type="match status" value="1"/>
</dbReference>
<dbReference type="PANTHER" id="PTHR42946:SF1">
    <property type="entry name" value="PHOSPHOGLUCOMUTASE (ALPHA-D-GLUCOSE-1,6-BISPHOSPHATE-DEPENDENT)"/>
    <property type="match status" value="1"/>
</dbReference>
<dbReference type="PANTHER" id="PTHR42946">
    <property type="entry name" value="PHOSPHOHEXOSE MUTASE"/>
    <property type="match status" value="1"/>
</dbReference>
<dbReference type="Pfam" id="PF02878">
    <property type="entry name" value="PGM_PMM_I"/>
    <property type="match status" value="1"/>
</dbReference>
<dbReference type="Pfam" id="PF02879">
    <property type="entry name" value="PGM_PMM_II"/>
    <property type="match status" value="1"/>
</dbReference>
<dbReference type="Pfam" id="PF02880">
    <property type="entry name" value="PGM_PMM_III"/>
    <property type="match status" value="1"/>
</dbReference>
<dbReference type="Pfam" id="PF00408">
    <property type="entry name" value="PGM_PMM_IV"/>
    <property type="match status" value="1"/>
</dbReference>
<dbReference type="PRINTS" id="PR00509">
    <property type="entry name" value="PGMPMM"/>
</dbReference>
<dbReference type="SUPFAM" id="SSF55957">
    <property type="entry name" value="Phosphoglucomutase, C-terminal domain"/>
    <property type="match status" value="1"/>
</dbReference>
<dbReference type="SUPFAM" id="SSF53738">
    <property type="entry name" value="Phosphoglucomutase, first 3 domains"/>
    <property type="match status" value="3"/>
</dbReference>
<dbReference type="PROSITE" id="PS00710">
    <property type="entry name" value="PGM_PMM"/>
    <property type="match status" value="1"/>
</dbReference>
<proteinExistence type="inferred from homology"/>
<gene>
    <name evidence="1" type="primary">glmM</name>
    <name type="ordered locus">AZOSEA27320</name>
    <name type="ORF">ebA4825</name>
</gene>
<feature type="chain" id="PRO_0000147838" description="Phosphoglucosamine mutase">
    <location>
        <begin position="1"/>
        <end position="450"/>
    </location>
</feature>
<feature type="active site" description="Phosphoserine intermediate" evidence="1">
    <location>
        <position position="107"/>
    </location>
</feature>
<feature type="binding site" description="via phosphate group" evidence="1">
    <location>
        <position position="107"/>
    </location>
    <ligand>
        <name>Mg(2+)</name>
        <dbReference type="ChEBI" id="CHEBI:18420"/>
    </ligand>
</feature>
<feature type="binding site" evidence="1">
    <location>
        <position position="246"/>
    </location>
    <ligand>
        <name>Mg(2+)</name>
        <dbReference type="ChEBI" id="CHEBI:18420"/>
    </ligand>
</feature>
<feature type="binding site" evidence="1">
    <location>
        <position position="248"/>
    </location>
    <ligand>
        <name>Mg(2+)</name>
        <dbReference type="ChEBI" id="CHEBI:18420"/>
    </ligand>
</feature>
<feature type="binding site" evidence="1">
    <location>
        <position position="250"/>
    </location>
    <ligand>
        <name>Mg(2+)</name>
        <dbReference type="ChEBI" id="CHEBI:18420"/>
    </ligand>
</feature>
<feature type="modified residue" description="Phosphoserine" evidence="1">
    <location>
        <position position="107"/>
    </location>
</feature>
<organism>
    <name type="scientific">Aromatoleum aromaticum (strain DSM 19018 / LMG 30748 / EbN1)</name>
    <name type="common">Azoarcus sp. (strain EbN1)</name>
    <dbReference type="NCBI Taxonomy" id="76114"/>
    <lineage>
        <taxon>Bacteria</taxon>
        <taxon>Pseudomonadati</taxon>
        <taxon>Pseudomonadota</taxon>
        <taxon>Betaproteobacteria</taxon>
        <taxon>Rhodocyclales</taxon>
        <taxon>Rhodocyclaceae</taxon>
        <taxon>Aromatoleum</taxon>
    </lineage>
</organism>
<sequence length="450" mass="48302">MGRKYFGTDGVRGRVGDSTITPEFVMRLGYAAGVTLVGREQLPPGERPAILIGKDTRISGYMLEAALEAGFAAAGVDVMLAGPVPTPAVAYLTRALRLQAGVVISASHNPYDDNGIKFFSANGTKLPDALEEEIEFRVDQPMVCAEASRLGKARRIVDAAGRYVEFCKSAFPNEFDLRGYRIVLDCAHGAAYHIGPSVFHELGAEVIPLGVEPNGLNINDQVGATHPQTLRSAVLANKADFGIALDGDGDRVVMVDGDGELYDGDKLLYVIAASRQAEGRLEGVVGTLMSNLGLERAIGRLGLAFARAKVGDRYVLETMHERGWRLGGENSGHIICLDRHTTGDGIVSALQVIAALIKGQCTLATACADLVFYPQKLINVPLAAGFDWRSDERIDQARSDAELELGEQGRVLLRPSGTEPLLRVMVEGKDGSQVERLARHIADCVRHASV</sequence>